<proteinExistence type="inferred from homology"/>
<organism>
    <name type="scientific">Pseudomonas putida (strain ATCC 700007 / DSM 6899 / JCM 31910 / BCRC 17059 / LMG 24140 / F1)</name>
    <dbReference type="NCBI Taxonomy" id="351746"/>
    <lineage>
        <taxon>Bacteria</taxon>
        <taxon>Pseudomonadati</taxon>
        <taxon>Pseudomonadota</taxon>
        <taxon>Gammaproteobacteria</taxon>
        <taxon>Pseudomonadales</taxon>
        <taxon>Pseudomonadaceae</taxon>
        <taxon>Pseudomonas</taxon>
    </lineage>
</organism>
<comment type="function">
    <text evidence="1">Provides the (R)-glutamate required for cell wall biosynthesis.</text>
</comment>
<comment type="catalytic activity">
    <reaction evidence="1">
        <text>L-glutamate = D-glutamate</text>
        <dbReference type="Rhea" id="RHEA:12813"/>
        <dbReference type="ChEBI" id="CHEBI:29985"/>
        <dbReference type="ChEBI" id="CHEBI:29986"/>
        <dbReference type="EC" id="5.1.1.3"/>
    </reaction>
</comment>
<comment type="pathway">
    <text evidence="1">Cell wall biogenesis; peptidoglycan biosynthesis.</text>
</comment>
<comment type="similarity">
    <text evidence="1">Belongs to the aspartate/glutamate racemases family.</text>
</comment>
<name>MURI_PSEP1</name>
<sequence>MAERSAPVGVMDSGVGGLSVLAEIQRLLPNETLLYVADCGHIPYGEKSPDYIRERCRHIAEFFHEQGAKAMVLACNTATVAAVADLRELYPTWPLVGMEPAVKPAAAATRSGVVGVLATTGTLQSAKFAALLDRFANDVQVITQPCPGLVELIETGDLASPALRQMLQGYVQPLLAAGCDTLILGCTHYPFLRPLLAGMVPNDVAIIDTGAAVARQLRRLLGANDLLAKGPAGAARFWTSADPEALRKILPVLWHKSDDVQSFAL</sequence>
<evidence type="ECO:0000255" key="1">
    <source>
        <dbReference type="HAMAP-Rule" id="MF_00258"/>
    </source>
</evidence>
<accession>A5VYG8</accession>
<keyword id="KW-0133">Cell shape</keyword>
<keyword id="KW-0961">Cell wall biogenesis/degradation</keyword>
<keyword id="KW-0413">Isomerase</keyword>
<keyword id="KW-0573">Peptidoglycan synthesis</keyword>
<gene>
    <name evidence="1" type="primary">murI</name>
    <name type="ordered locus">Pput_0764</name>
</gene>
<protein>
    <recommendedName>
        <fullName evidence="1">Glutamate racemase</fullName>
        <ecNumber evidence="1">5.1.1.3</ecNumber>
    </recommendedName>
</protein>
<dbReference type="EC" id="5.1.1.3" evidence="1"/>
<dbReference type="EMBL" id="CP000712">
    <property type="protein sequence ID" value="ABQ76928.1"/>
    <property type="molecule type" value="Genomic_DNA"/>
</dbReference>
<dbReference type="SMR" id="A5VYG8"/>
<dbReference type="KEGG" id="ppf:Pput_0764"/>
<dbReference type="eggNOG" id="COG0796">
    <property type="taxonomic scope" value="Bacteria"/>
</dbReference>
<dbReference type="HOGENOM" id="CLU_052344_1_0_6"/>
<dbReference type="UniPathway" id="UPA00219"/>
<dbReference type="GO" id="GO:0008881">
    <property type="term" value="F:glutamate racemase activity"/>
    <property type="evidence" value="ECO:0007669"/>
    <property type="project" value="UniProtKB-UniRule"/>
</dbReference>
<dbReference type="GO" id="GO:0071555">
    <property type="term" value="P:cell wall organization"/>
    <property type="evidence" value="ECO:0007669"/>
    <property type="project" value="UniProtKB-KW"/>
</dbReference>
<dbReference type="GO" id="GO:0009252">
    <property type="term" value="P:peptidoglycan biosynthetic process"/>
    <property type="evidence" value="ECO:0007669"/>
    <property type="project" value="UniProtKB-UniRule"/>
</dbReference>
<dbReference type="GO" id="GO:0008360">
    <property type="term" value="P:regulation of cell shape"/>
    <property type="evidence" value="ECO:0007669"/>
    <property type="project" value="UniProtKB-KW"/>
</dbReference>
<dbReference type="FunFam" id="3.40.50.1860:FF:000001">
    <property type="entry name" value="Glutamate racemase"/>
    <property type="match status" value="1"/>
</dbReference>
<dbReference type="Gene3D" id="3.40.50.1860">
    <property type="match status" value="2"/>
</dbReference>
<dbReference type="HAMAP" id="MF_00258">
    <property type="entry name" value="Glu_racemase"/>
    <property type="match status" value="1"/>
</dbReference>
<dbReference type="InterPro" id="IPR015942">
    <property type="entry name" value="Asp/Glu/hydantoin_racemase"/>
</dbReference>
<dbReference type="InterPro" id="IPR001920">
    <property type="entry name" value="Asp/Glu_race"/>
</dbReference>
<dbReference type="InterPro" id="IPR018187">
    <property type="entry name" value="Asp/Glu_racemase_AS_1"/>
</dbReference>
<dbReference type="InterPro" id="IPR033134">
    <property type="entry name" value="Asp/Glu_racemase_AS_2"/>
</dbReference>
<dbReference type="InterPro" id="IPR004391">
    <property type="entry name" value="Glu_race"/>
</dbReference>
<dbReference type="NCBIfam" id="TIGR00067">
    <property type="entry name" value="glut_race"/>
    <property type="match status" value="1"/>
</dbReference>
<dbReference type="PANTHER" id="PTHR21198">
    <property type="entry name" value="GLUTAMATE RACEMASE"/>
    <property type="match status" value="1"/>
</dbReference>
<dbReference type="PANTHER" id="PTHR21198:SF2">
    <property type="entry name" value="GLUTAMATE RACEMASE"/>
    <property type="match status" value="1"/>
</dbReference>
<dbReference type="Pfam" id="PF01177">
    <property type="entry name" value="Asp_Glu_race"/>
    <property type="match status" value="1"/>
</dbReference>
<dbReference type="SUPFAM" id="SSF53681">
    <property type="entry name" value="Aspartate/glutamate racemase"/>
    <property type="match status" value="2"/>
</dbReference>
<dbReference type="PROSITE" id="PS00923">
    <property type="entry name" value="ASP_GLU_RACEMASE_1"/>
    <property type="match status" value="1"/>
</dbReference>
<dbReference type="PROSITE" id="PS00924">
    <property type="entry name" value="ASP_GLU_RACEMASE_2"/>
    <property type="match status" value="1"/>
</dbReference>
<reference key="1">
    <citation type="submission" date="2007-05" db="EMBL/GenBank/DDBJ databases">
        <title>Complete sequence of Pseudomonas putida F1.</title>
        <authorList>
            <consortium name="US DOE Joint Genome Institute"/>
            <person name="Copeland A."/>
            <person name="Lucas S."/>
            <person name="Lapidus A."/>
            <person name="Barry K."/>
            <person name="Detter J.C."/>
            <person name="Glavina del Rio T."/>
            <person name="Hammon N."/>
            <person name="Israni S."/>
            <person name="Dalin E."/>
            <person name="Tice H."/>
            <person name="Pitluck S."/>
            <person name="Chain P."/>
            <person name="Malfatti S."/>
            <person name="Shin M."/>
            <person name="Vergez L."/>
            <person name="Schmutz J."/>
            <person name="Larimer F."/>
            <person name="Land M."/>
            <person name="Hauser L."/>
            <person name="Kyrpides N."/>
            <person name="Lykidis A."/>
            <person name="Parales R."/>
            <person name="Richardson P."/>
        </authorList>
    </citation>
    <scope>NUCLEOTIDE SEQUENCE [LARGE SCALE GENOMIC DNA]</scope>
    <source>
        <strain>ATCC 700007 / DSM 6899 / JCM 31910 / BCRC 17059 / LMG 24140 / F1</strain>
    </source>
</reference>
<feature type="chain" id="PRO_1000047599" description="Glutamate racemase">
    <location>
        <begin position="1"/>
        <end position="265"/>
    </location>
</feature>
<feature type="active site" description="Proton donor/acceptor" evidence="1">
    <location>
        <position position="75"/>
    </location>
</feature>
<feature type="active site" description="Proton donor/acceptor" evidence="1">
    <location>
        <position position="186"/>
    </location>
</feature>
<feature type="binding site" evidence="1">
    <location>
        <begin position="12"/>
        <end position="13"/>
    </location>
    <ligand>
        <name>substrate</name>
    </ligand>
</feature>
<feature type="binding site" evidence="1">
    <location>
        <begin position="44"/>
        <end position="45"/>
    </location>
    <ligand>
        <name>substrate</name>
    </ligand>
</feature>
<feature type="binding site" evidence="1">
    <location>
        <begin position="76"/>
        <end position="77"/>
    </location>
    <ligand>
        <name>substrate</name>
    </ligand>
</feature>
<feature type="binding site" evidence="1">
    <location>
        <begin position="187"/>
        <end position="188"/>
    </location>
    <ligand>
        <name>substrate</name>
    </ligand>
</feature>